<dbReference type="EC" id="2.7.7.6" evidence="1"/>
<dbReference type="EMBL" id="BA000002">
    <property type="protein sequence ID" value="BAA80865.1"/>
    <property type="molecule type" value="Genomic_DNA"/>
</dbReference>
<dbReference type="PIR" id="D72572">
    <property type="entry name" value="D72572"/>
</dbReference>
<dbReference type="RefSeq" id="WP_010866640.1">
    <property type="nucleotide sequence ID" value="NC_000854.2"/>
</dbReference>
<dbReference type="SMR" id="Q9YAT3"/>
<dbReference type="STRING" id="272557.APE_1856a"/>
<dbReference type="EnsemblBacteria" id="BAA80865">
    <property type="protein sequence ID" value="BAA80865"/>
    <property type="gene ID" value="APE_1856a"/>
</dbReference>
<dbReference type="GeneID" id="1446293"/>
<dbReference type="KEGG" id="ape:APE_1856a"/>
<dbReference type="eggNOG" id="arCOG04258">
    <property type="taxonomic scope" value="Archaea"/>
</dbReference>
<dbReference type="Proteomes" id="UP000002518">
    <property type="component" value="Chromosome"/>
</dbReference>
<dbReference type="GO" id="GO:0005737">
    <property type="term" value="C:cytoplasm"/>
    <property type="evidence" value="ECO:0007669"/>
    <property type="project" value="UniProtKB-SubCell"/>
</dbReference>
<dbReference type="GO" id="GO:0000428">
    <property type="term" value="C:DNA-directed RNA polymerase complex"/>
    <property type="evidence" value="ECO:0007669"/>
    <property type="project" value="UniProtKB-KW"/>
</dbReference>
<dbReference type="GO" id="GO:0003677">
    <property type="term" value="F:DNA binding"/>
    <property type="evidence" value="ECO:0007669"/>
    <property type="project" value="InterPro"/>
</dbReference>
<dbReference type="GO" id="GO:0003899">
    <property type="term" value="F:DNA-directed RNA polymerase activity"/>
    <property type="evidence" value="ECO:0007669"/>
    <property type="project" value="UniProtKB-UniRule"/>
</dbReference>
<dbReference type="GO" id="GO:0006366">
    <property type="term" value="P:transcription by RNA polymerase II"/>
    <property type="evidence" value="ECO:0007669"/>
    <property type="project" value="TreeGrafter"/>
</dbReference>
<dbReference type="GO" id="GO:0006362">
    <property type="term" value="P:transcription elongation by RNA polymerase I"/>
    <property type="evidence" value="ECO:0007669"/>
    <property type="project" value="TreeGrafter"/>
</dbReference>
<dbReference type="GO" id="GO:0042797">
    <property type="term" value="P:tRNA transcription by RNA polymerase III"/>
    <property type="evidence" value="ECO:0007669"/>
    <property type="project" value="TreeGrafter"/>
</dbReference>
<dbReference type="Gene3D" id="3.90.940.20">
    <property type="entry name" value="RPB5-like RNA polymerase subunit"/>
    <property type="match status" value="1"/>
</dbReference>
<dbReference type="HAMAP" id="MF_00025">
    <property type="entry name" value="RNApol_Rpo5_RPB5"/>
    <property type="match status" value="1"/>
</dbReference>
<dbReference type="InterPro" id="IPR014381">
    <property type="entry name" value="Arch_Rpo5/euc_Rpb5"/>
</dbReference>
<dbReference type="InterPro" id="IPR000783">
    <property type="entry name" value="RNA_pol_subH/Rpb5_C"/>
</dbReference>
<dbReference type="InterPro" id="IPR020608">
    <property type="entry name" value="RNA_pol_subH/Rpb5_CS"/>
</dbReference>
<dbReference type="InterPro" id="IPR035913">
    <property type="entry name" value="RPB5-like_sf"/>
</dbReference>
<dbReference type="NCBIfam" id="NF007129">
    <property type="entry name" value="PRK09570.1"/>
    <property type="match status" value="1"/>
</dbReference>
<dbReference type="PANTHER" id="PTHR10535">
    <property type="entry name" value="DNA-DIRECTED RNA POLYMERASES I, II, AND III SUBUNIT RPABC1"/>
    <property type="match status" value="1"/>
</dbReference>
<dbReference type="PANTHER" id="PTHR10535:SF0">
    <property type="entry name" value="DNA-DIRECTED RNA POLYMERASES I, II, AND III SUBUNIT RPABC1"/>
    <property type="match status" value="1"/>
</dbReference>
<dbReference type="Pfam" id="PF01191">
    <property type="entry name" value="RNA_pol_Rpb5_C"/>
    <property type="match status" value="1"/>
</dbReference>
<dbReference type="SUPFAM" id="SSF55287">
    <property type="entry name" value="RPB5-like RNA polymerase subunit"/>
    <property type="match status" value="1"/>
</dbReference>
<dbReference type="PROSITE" id="PS01110">
    <property type="entry name" value="RNA_POL_H_23KD"/>
    <property type="match status" value="1"/>
</dbReference>
<organism>
    <name type="scientific">Aeropyrum pernix (strain ATCC 700893 / DSM 11879 / JCM 9820 / NBRC 100138 / K1)</name>
    <dbReference type="NCBI Taxonomy" id="272557"/>
    <lineage>
        <taxon>Archaea</taxon>
        <taxon>Thermoproteota</taxon>
        <taxon>Thermoprotei</taxon>
        <taxon>Desulfurococcales</taxon>
        <taxon>Desulfurococcaceae</taxon>
        <taxon>Aeropyrum</taxon>
    </lineage>
</organism>
<protein>
    <recommendedName>
        <fullName evidence="1">DNA-directed RNA polymerase subunit Rpo5</fullName>
        <ecNumber evidence="1">2.7.7.6</ecNumber>
    </recommendedName>
    <alternativeName>
        <fullName evidence="1">DNA-directed RNA polymerase subunit H</fullName>
    </alternativeName>
</protein>
<gene>
    <name evidence="1" type="primary">rpo5</name>
    <name evidence="1" type="synonym">rpoH</name>
    <name type="ordered locus">APE_1856a</name>
    <name type="ORF">APES061</name>
</gene>
<accession>Q9YAT3</accession>
<sequence length="90" mass="10368">MSSKTRKSSRVILEHEYVPEHRLLSIEEAVQVLKMLGIKPWQLPKISVNDPIARLLKAKPGDIIEITRRSYTAGEAKYYRFVVAYQKGVK</sequence>
<name>RPO5_AERPE</name>
<evidence type="ECO:0000255" key="1">
    <source>
        <dbReference type="HAMAP-Rule" id="MF_00025"/>
    </source>
</evidence>
<keyword id="KW-0963">Cytoplasm</keyword>
<keyword id="KW-0240">DNA-directed RNA polymerase</keyword>
<keyword id="KW-0548">Nucleotidyltransferase</keyword>
<keyword id="KW-1185">Reference proteome</keyword>
<keyword id="KW-0804">Transcription</keyword>
<keyword id="KW-0808">Transferase</keyword>
<proteinExistence type="inferred from homology"/>
<feature type="chain" id="PRO_0000146088" description="DNA-directed RNA polymerase subunit Rpo5">
    <location>
        <begin position="1"/>
        <end position="90"/>
    </location>
</feature>
<comment type="function">
    <text evidence="1">DNA-dependent RNA polymerase (RNAP) catalyzes the transcription of DNA into RNA using the four ribonucleoside triphosphates as substrates.</text>
</comment>
<comment type="catalytic activity">
    <reaction evidence="1">
        <text>RNA(n) + a ribonucleoside 5'-triphosphate = RNA(n+1) + diphosphate</text>
        <dbReference type="Rhea" id="RHEA:21248"/>
        <dbReference type="Rhea" id="RHEA-COMP:14527"/>
        <dbReference type="Rhea" id="RHEA-COMP:17342"/>
        <dbReference type="ChEBI" id="CHEBI:33019"/>
        <dbReference type="ChEBI" id="CHEBI:61557"/>
        <dbReference type="ChEBI" id="CHEBI:140395"/>
        <dbReference type="EC" id="2.7.7.6"/>
    </reaction>
</comment>
<comment type="subunit">
    <text evidence="1">Part of the RNA polymerase complex.</text>
</comment>
<comment type="subcellular location">
    <subcellularLocation>
        <location evidence="1">Cytoplasm</location>
    </subcellularLocation>
</comment>
<comment type="similarity">
    <text evidence="1">Belongs to the archaeal Rpo5/eukaryotic RPB5 RNA polymerase subunit family.</text>
</comment>
<reference key="1">
    <citation type="journal article" date="1999" name="DNA Res.">
        <title>Complete genome sequence of an aerobic hyper-thermophilic crenarchaeon, Aeropyrum pernix K1.</title>
        <authorList>
            <person name="Kawarabayasi Y."/>
            <person name="Hino Y."/>
            <person name="Horikawa H."/>
            <person name="Yamazaki S."/>
            <person name="Haikawa Y."/>
            <person name="Jin-no K."/>
            <person name="Takahashi M."/>
            <person name="Sekine M."/>
            <person name="Baba S."/>
            <person name="Ankai A."/>
            <person name="Kosugi H."/>
            <person name="Hosoyama A."/>
            <person name="Fukui S."/>
            <person name="Nagai Y."/>
            <person name="Nishijima K."/>
            <person name="Nakazawa H."/>
            <person name="Takamiya M."/>
            <person name="Masuda S."/>
            <person name="Funahashi T."/>
            <person name="Tanaka T."/>
            <person name="Kudoh Y."/>
            <person name="Yamazaki J."/>
            <person name="Kushida N."/>
            <person name="Oguchi A."/>
            <person name="Aoki K."/>
            <person name="Kubota K."/>
            <person name="Nakamura Y."/>
            <person name="Nomura N."/>
            <person name="Sako Y."/>
            <person name="Kikuchi H."/>
        </authorList>
    </citation>
    <scope>NUCLEOTIDE SEQUENCE [LARGE SCALE GENOMIC DNA]</scope>
    <source>
        <strain>ATCC 700893 / DSM 11879 / JCM 9820 / NBRC 100138 / K1</strain>
    </source>
</reference>